<proteinExistence type="evidence at protein level"/>
<dbReference type="EMBL" id="BC116646">
    <property type="protein sequence ID" value="AAI16647.1"/>
    <property type="molecule type" value="mRNA"/>
</dbReference>
<dbReference type="EMBL" id="AK032912">
    <property type="protein sequence ID" value="BAC28083.1"/>
    <property type="molecule type" value="mRNA"/>
</dbReference>
<dbReference type="EMBL" id="BK001056">
    <property type="protein sequence ID" value="DAA01314.1"/>
    <property type="molecule type" value="mRNA"/>
</dbReference>
<dbReference type="CCDS" id="CCDS26570.1">
    <molecule id="Q7M6Z4-1"/>
</dbReference>
<dbReference type="RefSeq" id="NP_780423.2">
    <molecule id="Q7M6Z4-1"/>
    <property type="nucleotide sequence ID" value="NM_175214.3"/>
</dbReference>
<dbReference type="RefSeq" id="XP_006517489.1">
    <molecule id="Q7M6Z4-1"/>
    <property type="nucleotide sequence ID" value="XM_006517426.3"/>
</dbReference>
<dbReference type="RefSeq" id="XP_006517490.1">
    <molecule id="Q7M6Z4-1"/>
    <property type="nucleotide sequence ID" value="XM_006517427.3"/>
</dbReference>
<dbReference type="RefSeq" id="XP_006517492.1">
    <molecule id="Q7M6Z4-1"/>
    <property type="nucleotide sequence ID" value="XM_006517429.4"/>
</dbReference>
<dbReference type="RefSeq" id="XP_006517494.1">
    <molecule id="Q7M6Z4-1"/>
    <property type="nucleotide sequence ID" value="XM_006517431.3"/>
</dbReference>
<dbReference type="RefSeq" id="XP_006517495.1">
    <property type="nucleotide sequence ID" value="XM_006517432.2"/>
</dbReference>
<dbReference type="RefSeq" id="XP_006517496.1">
    <molecule id="Q7M6Z4-1"/>
    <property type="nucleotide sequence ID" value="XM_006517433.5"/>
</dbReference>
<dbReference type="RefSeq" id="XP_006517497.1">
    <molecule id="Q7M6Z4-1"/>
    <property type="nucleotide sequence ID" value="XM_006517434.3"/>
</dbReference>
<dbReference type="RefSeq" id="XP_006517498.1">
    <molecule id="Q7M6Z4-1"/>
    <property type="nucleotide sequence ID" value="XM_006517435.4"/>
</dbReference>
<dbReference type="RefSeq" id="XP_006517499.1">
    <molecule id="Q7M6Z4-1"/>
    <property type="nucleotide sequence ID" value="XM_006517436.4"/>
</dbReference>
<dbReference type="RefSeq" id="XP_011242881.1">
    <molecule id="Q7M6Z4-1"/>
    <property type="nucleotide sequence ID" value="XM_011244579.3"/>
</dbReference>
<dbReference type="RefSeq" id="XP_011242882.1">
    <molecule id="Q7M6Z4-1"/>
    <property type="nucleotide sequence ID" value="XM_011244580.4"/>
</dbReference>
<dbReference type="RefSeq" id="XP_017171108.1">
    <molecule id="Q7M6Z4-1"/>
    <property type="nucleotide sequence ID" value="XM_017315619.2"/>
</dbReference>
<dbReference type="RefSeq" id="XP_017171109.1">
    <molecule id="Q7M6Z4-1"/>
    <property type="nucleotide sequence ID" value="XM_017315620.2"/>
</dbReference>
<dbReference type="SMR" id="Q7M6Z4"/>
<dbReference type="BioGRID" id="217179">
    <property type="interactions" value="4"/>
</dbReference>
<dbReference type="DIP" id="DIP-59753N"/>
<dbReference type="FunCoup" id="Q7M6Z4">
    <property type="interactions" value="111"/>
</dbReference>
<dbReference type="IntAct" id="Q7M6Z4">
    <property type="interactions" value="1"/>
</dbReference>
<dbReference type="STRING" id="10090.ENSMUSP00000153598"/>
<dbReference type="iPTMnet" id="Q7M6Z4"/>
<dbReference type="PhosphoSitePlus" id="Q7M6Z4"/>
<dbReference type="jPOST" id="Q7M6Z4"/>
<dbReference type="PaxDb" id="10090-ENSMUSP00000043304"/>
<dbReference type="PeptideAtlas" id="Q7M6Z4"/>
<dbReference type="ProteomicsDB" id="269302">
    <molecule id="Q7M6Z4-1"/>
</dbReference>
<dbReference type="ProteomicsDB" id="269303">
    <molecule id="Q7M6Z4-2"/>
</dbReference>
<dbReference type="Antibodypedia" id="13061">
    <property type="antibodies" value="66 antibodies from 14 providers"/>
</dbReference>
<dbReference type="DNASU" id="75050"/>
<dbReference type="Ensembl" id="ENSMUST00000043605.6">
    <molecule id="Q7M6Z4-1"/>
    <property type="protein sequence ID" value="ENSMUSP00000043304.6"/>
    <property type="gene ID" value="ENSMUSG00000060176.5"/>
</dbReference>
<dbReference type="Ensembl" id="ENSMUST00000225388.2">
    <molecule id="Q7M6Z4-1"/>
    <property type="protein sequence ID" value="ENSMUSP00000153598.2"/>
    <property type="gene ID" value="ENSMUSG00000060176.5"/>
</dbReference>
<dbReference type="GeneID" id="75050"/>
<dbReference type="KEGG" id="mmu:75050"/>
<dbReference type="UCSC" id="uc007qtq.1">
    <molecule id="Q7M6Z4-1"/>
    <property type="organism name" value="mouse"/>
</dbReference>
<dbReference type="UCSC" id="uc011zao.1">
    <molecule id="Q7M6Z4-2"/>
    <property type="organism name" value="mouse"/>
</dbReference>
<dbReference type="AGR" id="MGI:1922300"/>
<dbReference type="CTD" id="55582"/>
<dbReference type="MGI" id="MGI:1922300">
    <property type="gene designation" value="Kif27"/>
</dbReference>
<dbReference type="VEuPathDB" id="HostDB:ENSMUSG00000060176"/>
<dbReference type="eggNOG" id="KOG0244">
    <property type="taxonomic scope" value="Eukaryota"/>
</dbReference>
<dbReference type="GeneTree" id="ENSGT00940000157487"/>
<dbReference type="HOGENOM" id="CLU_005591_0_0_1"/>
<dbReference type="InParanoid" id="Q7M6Z4"/>
<dbReference type="OMA" id="YVIMNTF"/>
<dbReference type="OrthoDB" id="3176171at2759"/>
<dbReference type="PhylomeDB" id="Q7M6Z4"/>
<dbReference type="TreeFam" id="TF325946"/>
<dbReference type="Reactome" id="R-MMU-2132295">
    <property type="pathway name" value="MHC class II antigen presentation"/>
</dbReference>
<dbReference type="Reactome" id="R-MMU-6811434">
    <property type="pathway name" value="COPI-dependent Golgi-to-ER retrograde traffic"/>
</dbReference>
<dbReference type="Reactome" id="R-MMU-983189">
    <property type="pathway name" value="Kinesins"/>
</dbReference>
<dbReference type="BioGRID-ORCS" id="75050">
    <property type="hits" value="5 hits in 77 CRISPR screens"/>
</dbReference>
<dbReference type="ChiTaRS" id="Kif27">
    <property type="organism name" value="mouse"/>
</dbReference>
<dbReference type="PRO" id="PR:Q7M6Z4"/>
<dbReference type="Proteomes" id="UP000000589">
    <property type="component" value="Chromosome 13"/>
</dbReference>
<dbReference type="RNAct" id="Q7M6Z4">
    <property type="molecule type" value="protein"/>
</dbReference>
<dbReference type="Bgee" id="ENSMUSG00000060176">
    <property type="expression patterns" value="Expressed in spermatid and 61 other cell types or tissues"/>
</dbReference>
<dbReference type="ExpressionAtlas" id="Q7M6Z4">
    <property type="expression patterns" value="baseline and differential"/>
</dbReference>
<dbReference type="GO" id="GO:0005929">
    <property type="term" value="C:cilium"/>
    <property type="evidence" value="ECO:0000314"/>
    <property type="project" value="UniProtKB"/>
</dbReference>
<dbReference type="GO" id="GO:0005737">
    <property type="term" value="C:cytoplasm"/>
    <property type="evidence" value="ECO:0007669"/>
    <property type="project" value="UniProtKB-KW"/>
</dbReference>
<dbReference type="GO" id="GO:0005576">
    <property type="term" value="C:extracellular region"/>
    <property type="evidence" value="ECO:0007669"/>
    <property type="project" value="GOC"/>
</dbReference>
<dbReference type="GO" id="GO:0005874">
    <property type="term" value="C:microtubule"/>
    <property type="evidence" value="ECO:0007669"/>
    <property type="project" value="UniProtKB-KW"/>
</dbReference>
<dbReference type="GO" id="GO:0005524">
    <property type="term" value="F:ATP binding"/>
    <property type="evidence" value="ECO:0007669"/>
    <property type="project" value="UniProtKB-KW"/>
</dbReference>
<dbReference type="GO" id="GO:0008017">
    <property type="term" value="F:microtubule binding"/>
    <property type="evidence" value="ECO:0007669"/>
    <property type="project" value="InterPro"/>
</dbReference>
<dbReference type="GO" id="GO:0003777">
    <property type="term" value="F:microtubule motor activity"/>
    <property type="evidence" value="ECO:0007669"/>
    <property type="project" value="InterPro"/>
</dbReference>
<dbReference type="GO" id="GO:0060271">
    <property type="term" value="P:cilium assembly"/>
    <property type="evidence" value="ECO:0000314"/>
    <property type="project" value="UniProtKB"/>
</dbReference>
<dbReference type="GO" id="GO:0003351">
    <property type="term" value="P:epithelial cilium movement involved in extracellular fluid movement"/>
    <property type="evidence" value="ECO:0000315"/>
    <property type="project" value="MGI"/>
</dbReference>
<dbReference type="GO" id="GO:0051649">
    <property type="term" value="P:establishment of localization in cell"/>
    <property type="evidence" value="ECO:0000315"/>
    <property type="project" value="MGI"/>
</dbReference>
<dbReference type="GO" id="GO:0021591">
    <property type="term" value="P:ventricular system development"/>
    <property type="evidence" value="ECO:0000315"/>
    <property type="project" value="MGI"/>
</dbReference>
<dbReference type="CDD" id="cd01372">
    <property type="entry name" value="KISc_KIF4"/>
    <property type="match status" value="1"/>
</dbReference>
<dbReference type="FunFam" id="3.40.850.10:FF:000025">
    <property type="entry name" value="kinesin-like protein KIF27 isoform X1"/>
    <property type="match status" value="1"/>
</dbReference>
<dbReference type="Gene3D" id="3.40.850.10">
    <property type="entry name" value="Kinesin motor domain"/>
    <property type="match status" value="1"/>
</dbReference>
<dbReference type="InterPro" id="IPR027640">
    <property type="entry name" value="Kinesin-like_fam"/>
</dbReference>
<dbReference type="InterPro" id="IPR019821">
    <property type="entry name" value="Kinesin_motor_CS"/>
</dbReference>
<dbReference type="InterPro" id="IPR001752">
    <property type="entry name" value="Kinesin_motor_dom"/>
</dbReference>
<dbReference type="InterPro" id="IPR036961">
    <property type="entry name" value="Kinesin_motor_dom_sf"/>
</dbReference>
<dbReference type="InterPro" id="IPR027417">
    <property type="entry name" value="P-loop_NTPase"/>
</dbReference>
<dbReference type="PANTHER" id="PTHR47969">
    <property type="entry name" value="CHROMOSOME-ASSOCIATED KINESIN KIF4A-RELATED"/>
    <property type="match status" value="1"/>
</dbReference>
<dbReference type="PANTHER" id="PTHR47969:SF30">
    <property type="entry name" value="KINESIN FAMILY MEMBER 27"/>
    <property type="match status" value="1"/>
</dbReference>
<dbReference type="Pfam" id="PF00225">
    <property type="entry name" value="Kinesin"/>
    <property type="match status" value="1"/>
</dbReference>
<dbReference type="PRINTS" id="PR00380">
    <property type="entry name" value="KINESINHEAVY"/>
</dbReference>
<dbReference type="SMART" id="SM00129">
    <property type="entry name" value="KISc"/>
    <property type="match status" value="1"/>
</dbReference>
<dbReference type="SUPFAM" id="SSF52540">
    <property type="entry name" value="P-loop containing nucleoside triphosphate hydrolases"/>
    <property type="match status" value="1"/>
</dbReference>
<dbReference type="PROSITE" id="PS00411">
    <property type="entry name" value="KINESIN_MOTOR_1"/>
    <property type="match status" value="1"/>
</dbReference>
<dbReference type="PROSITE" id="PS50067">
    <property type="entry name" value="KINESIN_MOTOR_2"/>
    <property type="match status" value="1"/>
</dbReference>
<sequence length="1394" mass="158956">MEEIPIKVAVRIRPLLCKEVLHNHQVCVRDIPNTQQIIIGRDRVFTFDFVFGKNSTQDEVYNTCIKPLVLSLIEGYNATVFAYGQTGSGKTYTIGGGHVASVVEGQKGIIPRAIQEIFQSISENPSIDFKIKVSYIEVYKEDLRDLLELETSMKDLHIREDEKGNTVIVGAKECQVESVEDVMSLLQVGNAARHTGTTQMNEHSSRSHAIFTISVCQVEKNAEAAENGEWYSHRHIVSKFHFVDLAGSERVTKTGNTGERFKESIQINSGLLALGNVISALGDPRRKSSHIPYRDAKITRLLKDSLGGSAKTVMITCVSPSSSDFDESLNSLKYANRARNIRNKPALNISPQADRMDEMEFEIKLLREALQSHQASISQASQASSENVPDQNRIHSLEEQVAQLQEECLGYQDCIEQAFAFLVDLKDAVKLNQKQQHKLQEWFSRTQEVRKAVLTPLPGNQGIGNLEEGPQHLTVLQLKRELKKYQCALAADQVVFTQKDLELEELRTQVQLMMQESKGHAVSLKEAQKVNRLQNEKIIEQQLLVDQLSAELAKRSLSVPTSAKESCGDGPDARASEKRPHTAPFESHWGHYVYIPSRQDFKKVCSSTPVYSLDQVFAGFRTRSQMLMGHLEDQDEVLHCQFSDNSDDEDSEGQEKPRVRSRSHSWAKKPGSVCSLVELSDTQAESQRSYLGNGDLKMESLQESQEINLQKLRTSELILNKAKQKMRELTINIRMKEDLIKELIKTGNNAKSVSRQYSLKVTKLEHEAEQAKVELTETRKQLQELESKDLSDVALKVKLQKEFRKKMDAAKMRVQVLQKKQQDSKKLASLSIQNEKRASELEHNVDHLKYQKVQLQRRLREEGEKKKQLDAEIKRDQQKIKELQLKAGQGEGLNPKAEDQDGFNLNRRKSPFRSGDQFQKLDEQRKWLDEEVEKVLSQRQELEMLEEDLKKREAIVSKKEALLQEKSLLENKKLRSSQALSTDGLKISARLNLLDQELSEKSLQLESSPTEEKMKISEQVQALQRERDQLQRQRNSVDERLKHGRVLSPKEEHLLFQLEEGIEALEAAIEFKNESIQSRQNSLKASFQNLSQSEANVLEKLVCLNITEIRAILFKYFNKVINLRETERKQQLQNKEMKMKVLERDNVVHELESALEHLRLQCDRRLTLQQKEHEQKMQLLLQHFKDQDGDSIIETLKNYEDKIQQLEKDLYFYKKTSRDLKKRLKDPAQGAAQWQRTLTEHHDAGDGVLNPEETTVLSEELKWASRTENTKLNGSEREVDNSSSSLKTQPLTQQIPEDGPDSLPARSSIAPSSGQLQSIADKTEARPFTHSQSPVPHQFQPVRSIGPLQGVKPVKLCRRELRQISAMELSLRRCSLGAGGRSMTADSLEDPEEN</sequence>
<gene>
    <name type="primary">Kif27</name>
</gene>
<reference key="1">
    <citation type="journal article" date="2004" name="Genome Res.">
        <title>The status, quality, and expansion of the NIH full-length cDNA project: the Mammalian Gene Collection (MGC).</title>
        <authorList>
            <consortium name="The MGC Project Team"/>
        </authorList>
    </citation>
    <scope>NUCLEOTIDE SEQUENCE [LARGE SCALE MRNA] (ISOFORM 2)</scope>
</reference>
<reference key="2">
    <citation type="journal article" date="2005" name="Science">
        <title>The transcriptional landscape of the mammalian genome.</title>
        <authorList>
            <person name="Carninci P."/>
            <person name="Kasukawa T."/>
            <person name="Katayama S."/>
            <person name="Gough J."/>
            <person name="Frith M.C."/>
            <person name="Maeda N."/>
            <person name="Oyama R."/>
            <person name="Ravasi T."/>
            <person name="Lenhard B."/>
            <person name="Wells C."/>
            <person name="Kodzius R."/>
            <person name="Shimokawa K."/>
            <person name="Bajic V.B."/>
            <person name="Brenner S.E."/>
            <person name="Batalov S."/>
            <person name="Forrest A.R."/>
            <person name="Zavolan M."/>
            <person name="Davis M.J."/>
            <person name="Wilming L.G."/>
            <person name="Aidinis V."/>
            <person name="Allen J.E."/>
            <person name="Ambesi-Impiombato A."/>
            <person name="Apweiler R."/>
            <person name="Aturaliya R.N."/>
            <person name="Bailey T.L."/>
            <person name="Bansal M."/>
            <person name="Baxter L."/>
            <person name="Beisel K.W."/>
            <person name="Bersano T."/>
            <person name="Bono H."/>
            <person name="Chalk A.M."/>
            <person name="Chiu K.P."/>
            <person name="Choudhary V."/>
            <person name="Christoffels A."/>
            <person name="Clutterbuck D.R."/>
            <person name="Crowe M.L."/>
            <person name="Dalla E."/>
            <person name="Dalrymple B.P."/>
            <person name="de Bono B."/>
            <person name="Della Gatta G."/>
            <person name="di Bernardo D."/>
            <person name="Down T."/>
            <person name="Engstrom P."/>
            <person name="Fagiolini M."/>
            <person name="Faulkner G."/>
            <person name="Fletcher C.F."/>
            <person name="Fukushima T."/>
            <person name="Furuno M."/>
            <person name="Futaki S."/>
            <person name="Gariboldi M."/>
            <person name="Georgii-Hemming P."/>
            <person name="Gingeras T.R."/>
            <person name="Gojobori T."/>
            <person name="Green R.E."/>
            <person name="Gustincich S."/>
            <person name="Harbers M."/>
            <person name="Hayashi Y."/>
            <person name="Hensch T.K."/>
            <person name="Hirokawa N."/>
            <person name="Hill D."/>
            <person name="Huminiecki L."/>
            <person name="Iacono M."/>
            <person name="Ikeo K."/>
            <person name="Iwama A."/>
            <person name="Ishikawa T."/>
            <person name="Jakt M."/>
            <person name="Kanapin A."/>
            <person name="Katoh M."/>
            <person name="Kawasawa Y."/>
            <person name="Kelso J."/>
            <person name="Kitamura H."/>
            <person name="Kitano H."/>
            <person name="Kollias G."/>
            <person name="Krishnan S.P."/>
            <person name="Kruger A."/>
            <person name="Kummerfeld S.K."/>
            <person name="Kurochkin I.V."/>
            <person name="Lareau L.F."/>
            <person name="Lazarevic D."/>
            <person name="Lipovich L."/>
            <person name="Liu J."/>
            <person name="Liuni S."/>
            <person name="McWilliam S."/>
            <person name="Madan Babu M."/>
            <person name="Madera M."/>
            <person name="Marchionni L."/>
            <person name="Matsuda H."/>
            <person name="Matsuzawa S."/>
            <person name="Miki H."/>
            <person name="Mignone F."/>
            <person name="Miyake S."/>
            <person name="Morris K."/>
            <person name="Mottagui-Tabar S."/>
            <person name="Mulder N."/>
            <person name="Nakano N."/>
            <person name="Nakauchi H."/>
            <person name="Ng P."/>
            <person name="Nilsson R."/>
            <person name="Nishiguchi S."/>
            <person name="Nishikawa S."/>
            <person name="Nori F."/>
            <person name="Ohara O."/>
            <person name="Okazaki Y."/>
            <person name="Orlando V."/>
            <person name="Pang K.C."/>
            <person name="Pavan W.J."/>
            <person name="Pavesi G."/>
            <person name="Pesole G."/>
            <person name="Petrovsky N."/>
            <person name="Piazza S."/>
            <person name="Reed J."/>
            <person name="Reid J.F."/>
            <person name="Ring B.Z."/>
            <person name="Ringwald M."/>
            <person name="Rost B."/>
            <person name="Ruan Y."/>
            <person name="Salzberg S.L."/>
            <person name="Sandelin A."/>
            <person name="Schneider C."/>
            <person name="Schoenbach C."/>
            <person name="Sekiguchi K."/>
            <person name="Semple C.A."/>
            <person name="Seno S."/>
            <person name="Sessa L."/>
            <person name="Sheng Y."/>
            <person name="Shibata Y."/>
            <person name="Shimada H."/>
            <person name="Shimada K."/>
            <person name="Silva D."/>
            <person name="Sinclair B."/>
            <person name="Sperling S."/>
            <person name="Stupka E."/>
            <person name="Sugiura K."/>
            <person name="Sultana R."/>
            <person name="Takenaka Y."/>
            <person name="Taki K."/>
            <person name="Tammoja K."/>
            <person name="Tan S.L."/>
            <person name="Tang S."/>
            <person name="Taylor M.S."/>
            <person name="Tegner J."/>
            <person name="Teichmann S.A."/>
            <person name="Ueda H.R."/>
            <person name="van Nimwegen E."/>
            <person name="Verardo R."/>
            <person name="Wei C.L."/>
            <person name="Yagi K."/>
            <person name="Yamanishi H."/>
            <person name="Zabarovsky E."/>
            <person name="Zhu S."/>
            <person name="Zimmer A."/>
            <person name="Hide W."/>
            <person name="Bult C."/>
            <person name="Grimmond S.M."/>
            <person name="Teasdale R.D."/>
            <person name="Liu E.T."/>
            <person name="Brusic V."/>
            <person name="Quackenbush J."/>
            <person name="Wahlestedt C."/>
            <person name="Mattick J.S."/>
            <person name="Hume D.A."/>
            <person name="Kai C."/>
            <person name="Sasaki D."/>
            <person name="Tomaru Y."/>
            <person name="Fukuda S."/>
            <person name="Kanamori-Katayama M."/>
            <person name="Suzuki M."/>
            <person name="Aoki J."/>
            <person name="Arakawa T."/>
            <person name="Iida J."/>
            <person name="Imamura K."/>
            <person name="Itoh M."/>
            <person name="Kato T."/>
            <person name="Kawaji H."/>
            <person name="Kawagashira N."/>
            <person name="Kawashima T."/>
            <person name="Kojima M."/>
            <person name="Kondo S."/>
            <person name="Konno H."/>
            <person name="Nakano K."/>
            <person name="Ninomiya N."/>
            <person name="Nishio T."/>
            <person name="Okada M."/>
            <person name="Plessy C."/>
            <person name="Shibata K."/>
            <person name="Shiraki T."/>
            <person name="Suzuki S."/>
            <person name="Tagami M."/>
            <person name="Waki K."/>
            <person name="Watahiki A."/>
            <person name="Okamura-Oho Y."/>
            <person name="Suzuki H."/>
            <person name="Kawai J."/>
            <person name="Hayashizaki Y."/>
        </authorList>
    </citation>
    <scope>NUCLEOTIDE SEQUENCE [LARGE SCALE MRNA] OF 726-1394 (ISOFORM 1)</scope>
    <source>
        <strain>C57BL/6J</strain>
    </source>
</reference>
<reference key="3">
    <citation type="journal article" date="2003" name="BMC Genomics">
        <title>Gene discovery in the hamster: a comparative genomics approach for gene annotation by sequencing of hamster testis cDNAs.</title>
        <authorList>
            <person name="Oduru S."/>
            <person name="Campbell J.L."/>
            <person name="Karri S."/>
            <person name="Hendry W.J."/>
            <person name="Khan S.A."/>
            <person name="Williams S.C."/>
        </authorList>
    </citation>
    <scope>IDENTIFICATION (ISOFORM 1)</scope>
</reference>
<reference key="4">
    <citation type="journal article" date="2009" name="Nature">
        <title>Fused has evolved divergent roles in vertebrate Hedgehog signalling and motile ciliogenesis.</title>
        <authorList>
            <person name="Wilson C.W."/>
            <person name="Nguyen C.T."/>
            <person name="Chen M.H."/>
            <person name="Yang J.H."/>
            <person name="Gacayan R."/>
            <person name="Huang J."/>
            <person name="Chen J.N."/>
            <person name="Chuang P.T."/>
        </authorList>
    </citation>
    <scope>FUNCTION</scope>
    <scope>SUBCELLULAR LOCATION</scope>
    <scope>INTERACTION WITH STK36</scope>
</reference>
<reference key="5">
    <citation type="journal article" date="2010" name="Cell">
        <title>A tissue-specific atlas of mouse protein phosphorylation and expression.</title>
        <authorList>
            <person name="Huttlin E.L."/>
            <person name="Jedrychowski M.P."/>
            <person name="Elias J.E."/>
            <person name="Goswami T."/>
            <person name="Rad R."/>
            <person name="Beausoleil S.A."/>
            <person name="Villen J."/>
            <person name="Haas W."/>
            <person name="Sowa M.E."/>
            <person name="Gygi S.P."/>
        </authorList>
    </citation>
    <scope>PHOSPHORYLATION [LARGE SCALE ANALYSIS] AT SER-643 AND SER-646</scope>
    <scope>IDENTIFICATION BY MASS SPECTROMETRY [LARGE SCALE ANALYSIS]</scope>
    <source>
        <tissue>Testis</tissue>
    </source>
</reference>
<feature type="chain" id="PRO_0000307144" description="Kinesin-like protein KIF27">
    <location>
        <begin position="1"/>
        <end position="1394"/>
    </location>
</feature>
<feature type="domain" description="Kinesin motor" evidence="3">
    <location>
        <begin position="5"/>
        <end position="341"/>
    </location>
</feature>
<feature type="region of interest" description="Disordered" evidence="4">
    <location>
        <begin position="559"/>
        <end position="582"/>
    </location>
</feature>
<feature type="region of interest" description="Disordered" evidence="4">
    <location>
        <begin position="642"/>
        <end position="665"/>
    </location>
</feature>
<feature type="region of interest" description="Disordered" evidence="4">
    <location>
        <begin position="886"/>
        <end position="916"/>
    </location>
</feature>
<feature type="region of interest" description="Disordered" evidence="4">
    <location>
        <begin position="1267"/>
        <end position="1319"/>
    </location>
</feature>
<feature type="region of interest" description="Disordered" evidence="4">
    <location>
        <begin position="1325"/>
        <end position="1344"/>
    </location>
</feature>
<feature type="coiled-coil region" evidence="2">
    <location>
        <begin position="352"/>
        <end position="418"/>
    </location>
</feature>
<feature type="coiled-coil region" evidence="2">
    <location>
        <begin position="498"/>
        <end position="554"/>
    </location>
</feature>
<feature type="coiled-coil region" evidence="2">
    <location>
        <begin position="709"/>
        <end position="891"/>
    </location>
</feature>
<feature type="coiled-coil region" evidence="2">
    <location>
        <begin position="921"/>
        <end position="1078"/>
    </location>
</feature>
<feature type="coiled-coil region" evidence="2">
    <location>
        <begin position="1118"/>
        <end position="1152"/>
    </location>
</feature>
<feature type="coiled-coil region" evidence="2">
    <location>
        <begin position="1186"/>
        <end position="1226"/>
    </location>
</feature>
<feature type="compositionally biased region" description="Basic and acidic residues" evidence="4">
    <location>
        <begin position="571"/>
        <end position="580"/>
    </location>
</feature>
<feature type="compositionally biased region" description="Basic and acidic residues" evidence="4">
    <location>
        <begin position="1267"/>
        <end position="1280"/>
    </location>
</feature>
<feature type="compositionally biased region" description="Polar residues" evidence="4">
    <location>
        <begin position="1281"/>
        <end position="1295"/>
    </location>
</feature>
<feature type="compositionally biased region" description="Polar residues" evidence="4">
    <location>
        <begin position="1309"/>
        <end position="1319"/>
    </location>
</feature>
<feature type="binding site" evidence="3">
    <location>
        <begin position="84"/>
        <end position="91"/>
    </location>
    <ligand>
        <name>ATP</name>
        <dbReference type="ChEBI" id="CHEBI:30616"/>
    </ligand>
</feature>
<feature type="modified residue" description="Phosphoserine" evidence="9">
    <location>
        <position position="643"/>
    </location>
</feature>
<feature type="modified residue" description="Phosphoserine" evidence="9">
    <location>
        <position position="646"/>
    </location>
</feature>
<feature type="modified residue" description="Phosphoserine" evidence="1">
    <location>
        <position position="672"/>
    </location>
</feature>
<feature type="modified residue" description="Phosphoserine" evidence="1">
    <location>
        <position position="675"/>
    </location>
</feature>
<feature type="modified residue" description="Phosphoserine" evidence="1">
    <location>
        <position position="704"/>
    </location>
</feature>
<feature type="modified residue" description="Phosphoserine" evidence="1">
    <location>
        <position position="999"/>
    </location>
</feature>
<feature type="modified residue" description="Phosphoserine" evidence="1">
    <location>
        <position position="1365"/>
    </location>
</feature>
<feature type="modified residue" description="Phosphoserine" evidence="1">
    <location>
        <position position="1387"/>
    </location>
</feature>
<feature type="splice variant" id="VSP_028607" description="In isoform 2." evidence="6">
    <location>
        <begin position="1"/>
        <end position="484"/>
    </location>
</feature>
<feature type="splice variant" id="VSP_028608" description="In isoform 2." evidence="6">
    <original>YQ</original>
    <variation>ML</variation>
    <location>
        <begin position="485"/>
        <end position="486"/>
    </location>
</feature>
<feature type="sequence conflict" description="In Ref. 2; BAC28083." evidence="7" ref="2">
    <original>G</original>
    <variation>E</variation>
    <location>
        <position position="1377"/>
    </location>
</feature>
<evidence type="ECO:0000250" key="1">
    <source>
        <dbReference type="UniProtKB" id="Q7M6Z5"/>
    </source>
</evidence>
<evidence type="ECO:0000255" key="2"/>
<evidence type="ECO:0000255" key="3">
    <source>
        <dbReference type="PROSITE-ProRule" id="PRU00283"/>
    </source>
</evidence>
<evidence type="ECO:0000256" key="4">
    <source>
        <dbReference type="SAM" id="MobiDB-lite"/>
    </source>
</evidence>
<evidence type="ECO:0000269" key="5">
    <source>
    </source>
</evidence>
<evidence type="ECO:0000303" key="6">
    <source>
    </source>
</evidence>
<evidence type="ECO:0000305" key="7"/>
<evidence type="ECO:0000305" key="8">
    <source>
    </source>
</evidence>
<evidence type="ECO:0007744" key="9">
    <source>
    </source>
</evidence>
<protein>
    <recommendedName>
        <fullName>Kinesin-like protein KIF27</fullName>
    </recommendedName>
</protein>
<accession>Q7M6Z4</accession>
<accession>Q14AX5</accession>
<accession>Q8BMB9</accession>
<organism>
    <name type="scientific">Mus musculus</name>
    <name type="common">Mouse</name>
    <dbReference type="NCBI Taxonomy" id="10090"/>
    <lineage>
        <taxon>Eukaryota</taxon>
        <taxon>Metazoa</taxon>
        <taxon>Chordata</taxon>
        <taxon>Craniata</taxon>
        <taxon>Vertebrata</taxon>
        <taxon>Euteleostomi</taxon>
        <taxon>Mammalia</taxon>
        <taxon>Eutheria</taxon>
        <taxon>Euarchontoglires</taxon>
        <taxon>Glires</taxon>
        <taxon>Rodentia</taxon>
        <taxon>Myomorpha</taxon>
        <taxon>Muroidea</taxon>
        <taxon>Muridae</taxon>
        <taxon>Murinae</taxon>
        <taxon>Mus</taxon>
        <taxon>Mus</taxon>
    </lineage>
</organism>
<comment type="function">
    <text evidence="5">Plays an essential role in motile ciliogenesis.</text>
</comment>
<comment type="subunit">
    <text evidence="5">Interacts with STK36.</text>
</comment>
<comment type="interaction">
    <interactant intactId="EBI-15765182">
        <id>Q7M6Z4</id>
    </interactant>
    <interactant intactId="EBI-15765145">
        <id>Q69ZM6</id>
        <label>Stk36</label>
    </interactant>
    <organismsDiffer>false</organismsDiffer>
    <experiments>2</experiments>
</comment>
<comment type="subcellular location">
    <subcellularLocation>
        <location evidence="8">Cytoplasm</location>
        <location evidence="8">Cytoskeleton</location>
    </subcellularLocation>
    <subcellularLocation>
        <location evidence="5">Cell projection</location>
        <location evidence="5">Cilium</location>
    </subcellularLocation>
    <text>Localizes to centrioles and basal bodies.</text>
</comment>
<comment type="alternative products">
    <event type="alternative splicing"/>
    <isoform>
        <id>Q7M6Z4-1</id>
        <name>1</name>
        <name>KIF27A</name>
        <sequence type="displayed"/>
    </isoform>
    <isoform>
        <id>Q7M6Z4-2</id>
        <name>2</name>
        <sequence type="described" ref="VSP_028607 VSP_028608"/>
    </isoform>
</comment>
<comment type="similarity">
    <text evidence="3">Belongs to the TRAFAC class myosin-kinesin ATPase superfamily. Kinesin family. KIF27 subfamily.</text>
</comment>
<name>KIF27_MOUSE</name>
<keyword id="KW-0025">Alternative splicing</keyword>
<keyword id="KW-0067">ATP-binding</keyword>
<keyword id="KW-0966">Cell projection</keyword>
<keyword id="KW-0969">Cilium</keyword>
<keyword id="KW-0970">Cilium biogenesis/degradation</keyword>
<keyword id="KW-0175">Coiled coil</keyword>
<keyword id="KW-0963">Cytoplasm</keyword>
<keyword id="KW-0206">Cytoskeleton</keyword>
<keyword id="KW-0493">Microtubule</keyword>
<keyword id="KW-0505">Motor protein</keyword>
<keyword id="KW-0547">Nucleotide-binding</keyword>
<keyword id="KW-0597">Phosphoprotein</keyword>
<keyword id="KW-1185">Reference proteome</keyword>